<accession>B2V2K0</accession>
<proteinExistence type="inferred from homology"/>
<comment type="function">
    <text evidence="1">An essential GTPase that binds both GDP and GTP, with rapid nucleotide exchange. Plays a role in 16S rRNA processing and 30S ribosomal subunit biogenesis and possibly also in cell cycle regulation and energy metabolism.</text>
</comment>
<comment type="subunit">
    <text evidence="1">Monomer.</text>
</comment>
<comment type="subcellular location">
    <subcellularLocation>
        <location>Cytoplasm</location>
    </subcellularLocation>
    <subcellularLocation>
        <location evidence="1">Cell membrane</location>
        <topology evidence="1">Peripheral membrane protein</topology>
    </subcellularLocation>
</comment>
<comment type="similarity">
    <text evidence="1 2">Belongs to the TRAFAC class TrmE-Era-EngA-EngB-Septin-like GTPase superfamily. Era GTPase family.</text>
</comment>
<feature type="chain" id="PRO_1000121309" description="GTPase Era">
    <location>
        <begin position="1"/>
        <end position="295"/>
    </location>
</feature>
<feature type="domain" description="Era-type G" evidence="2">
    <location>
        <begin position="3"/>
        <end position="170"/>
    </location>
</feature>
<feature type="domain" description="KH type-2" evidence="1">
    <location>
        <begin position="201"/>
        <end position="278"/>
    </location>
</feature>
<feature type="region of interest" description="G1" evidence="2">
    <location>
        <begin position="11"/>
        <end position="18"/>
    </location>
</feature>
<feature type="region of interest" description="G2" evidence="2">
    <location>
        <begin position="37"/>
        <end position="41"/>
    </location>
</feature>
<feature type="region of interest" description="G3" evidence="2">
    <location>
        <begin position="58"/>
        <end position="61"/>
    </location>
</feature>
<feature type="region of interest" description="G4" evidence="2">
    <location>
        <begin position="120"/>
        <end position="123"/>
    </location>
</feature>
<feature type="region of interest" description="G5" evidence="2">
    <location>
        <begin position="149"/>
        <end position="151"/>
    </location>
</feature>
<feature type="binding site" evidence="1">
    <location>
        <begin position="11"/>
        <end position="18"/>
    </location>
    <ligand>
        <name>GTP</name>
        <dbReference type="ChEBI" id="CHEBI:37565"/>
    </ligand>
</feature>
<feature type="binding site" evidence="1">
    <location>
        <begin position="58"/>
        <end position="62"/>
    </location>
    <ligand>
        <name>GTP</name>
        <dbReference type="ChEBI" id="CHEBI:37565"/>
    </ligand>
</feature>
<feature type="binding site" evidence="1">
    <location>
        <begin position="120"/>
        <end position="123"/>
    </location>
    <ligand>
        <name>GTP</name>
        <dbReference type="ChEBI" id="CHEBI:37565"/>
    </ligand>
</feature>
<dbReference type="EMBL" id="CP001078">
    <property type="protein sequence ID" value="ACD53688.1"/>
    <property type="molecule type" value="Genomic_DNA"/>
</dbReference>
<dbReference type="RefSeq" id="WP_003370809.1">
    <property type="nucleotide sequence ID" value="NC_010723.1"/>
</dbReference>
<dbReference type="SMR" id="B2V2K0"/>
<dbReference type="KEGG" id="cbt:CLH_0873"/>
<dbReference type="HOGENOM" id="CLU_038009_1_0_9"/>
<dbReference type="GO" id="GO:0005829">
    <property type="term" value="C:cytosol"/>
    <property type="evidence" value="ECO:0007669"/>
    <property type="project" value="TreeGrafter"/>
</dbReference>
<dbReference type="GO" id="GO:0005886">
    <property type="term" value="C:plasma membrane"/>
    <property type="evidence" value="ECO:0007669"/>
    <property type="project" value="UniProtKB-SubCell"/>
</dbReference>
<dbReference type="GO" id="GO:0005525">
    <property type="term" value="F:GTP binding"/>
    <property type="evidence" value="ECO:0007669"/>
    <property type="project" value="UniProtKB-UniRule"/>
</dbReference>
<dbReference type="GO" id="GO:0003924">
    <property type="term" value="F:GTPase activity"/>
    <property type="evidence" value="ECO:0007669"/>
    <property type="project" value="UniProtKB-UniRule"/>
</dbReference>
<dbReference type="GO" id="GO:0043024">
    <property type="term" value="F:ribosomal small subunit binding"/>
    <property type="evidence" value="ECO:0007669"/>
    <property type="project" value="TreeGrafter"/>
</dbReference>
<dbReference type="GO" id="GO:0070181">
    <property type="term" value="F:small ribosomal subunit rRNA binding"/>
    <property type="evidence" value="ECO:0007669"/>
    <property type="project" value="UniProtKB-UniRule"/>
</dbReference>
<dbReference type="GO" id="GO:0000028">
    <property type="term" value="P:ribosomal small subunit assembly"/>
    <property type="evidence" value="ECO:0007669"/>
    <property type="project" value="TreeGrafter"/>
</dbReference>
<dbReference type="CDD" id="cd04163">
    <property type="entry name" value="Era"/>
    <property type="match status" value="1"/>
</dbReference>
<dbReference type="CDD" id="cd22534">
    <property type="entry name" value="KH-II_Era"/>
    <property type="match status" value="1"/>
</dbReference>
<dbReference type="FunFam" id="3.30.300.20:FF:000003">
    <property type="entry name" value="GTPase Era"/>
    <property type="match status" value="1"/>
</dbReference>
<dbReference type="FunFam" id="3.40.50.300:FF:000094">
    <property type="entry name" value="GTPase Era"/>
    <property type="match status" value="1"/>
</dbReference>
<dbReference type="Gene3D" id="3.30.300.20">
    <property type="match status" value="1"/>
</dbReference>
<dbReference type="Gene3D" id="3.40.50.300">
    <property type="entry name" value="P-loop containing nucleotide triphosphate hydrolases"/>
    <property type="match status" value="1"/>
</dbReference>
<dbReference type="HAMAP" id="MF_00367">
    <property type="entry name" value="GTPase_Era"/>
    <property type="match status" value="1"/>
</dbReference>
<dbReference type="InterPro" id="IPR030388">
    <property type="entry name" value="G_ERA_dom"/>
</dbReference>
<dbReference type="InterPro" id="IPR006073">
    <property type="entry name" value="GTP-bd"/>
</dbReference>
<dbReference type="InterPro" id="IPR005662">
    <property type="entry name" value="GTPase_Era-like"/>
</dbReference>
<dbReference type="InterPro" id="IPR015946">
    <property type="entry name" value="KH_dom-like_a/b"/>
</dbReference>
<dbReference type="InterPro" id="IPR004044">
    <property type="entry name" value="KH_dom_type_2"/>
</dbReference>
<dbReference type="InterPro" id="IPR009019">
    <property type="entry name" value="KH_sf_prok-type"/>
</dbReference>
<dbReference type="InterPro" id="IPR027417">
    <property type="entry name" value="P-loop_NTPase"/>
</dbReference>
<dbReference type="InterPro" id="IPR005225">
    <property type="entry name" value="Small_GTP-bd"/>
</dbReference>
<dbReference type="NCBIfam" id="TIGR00436">
    <property type="entry name" value="era"/>
    <property type="match status" value="1"/>
</dbReference>
<dbReference type="NCBIfam" id="NF000908">
    <property type="entry name" value="PRK00089.1"/>
    <property type="match status" value="1"/>
</dbReference>
<dbReference type="NCBIfam" id="TIGR00231">
    <property type="entry name" value="small_GTP"/>
    <property type="match status" value="1"/>
</dbReference>
<dbReference type="PANTHER" id="PTHR42698">
    <property type="entry name" value="GTPASE ERA"/>
    <property type="match status" value="1"/>
</dbReference>
<dbReference type="PANTHER" id="PTHR42698:SF1">
    <property type="entry name" value="GTPASE ERA, MITOCHONDRIAL"/>
    <property type="match status" value="1"/>
</dbReference>
<dbReference type="Pfam" id="PF07650">
    <property type="entry name" value="KH_2"/>
    <property type="match status" value="1"/>
</dbReference>
<dbReference type="Pfam" id="PF01926">
    <property type="entry name" value="MMR_HSR1"/>
    <property type="match status" value="1"/>
</dbReference>
<dbReference type="SUPFAM" id="SSF52540">
    <property type="entry name" value="P-loop containing nucleoside triphosphate hydrolases"/>
    <property type="match status" value="1"/>
</dbReference>
<dbReference type="SUPFAM" id="SSF54814">
    <property type="entry name" value="Prokaryotic type KH domain (KH-domain type II)"/>
    <property type="match status" value="1"/>
</dbReference>
<dbReference type="PROSITE" id="PS51713">
    <property type="entry name" value="G_ERA"/>
    <property type="match status" value="1"/>
</dbReference>
<dbReference type="PROSITE" id="PS50823">
    <property type="entry name" value="KH_TYPE_2"/>
    <property type="match status" value="1"/>
</dbReference>
<reference key="1">
    <citation type="submission" date="2008-05" db="EMBL/GenBank/DDBJ databases">
        <title>Complete genome sequence of Clostridium botulinum E3 str. Alaska E43.</title>
        <authorList>
            <person name="Brinkac L.M."/>
            <person name="Brown J.L."/>
            <person name="Bruce D."/>
            <person name="Detter C."/>
            <person name="Munk C."/>
            <person name="Smith L.A."/>
            <person name="Smith T.J."/>
            <person name="Sutton G."/>
            <person name="Brettin T.S."/>
        </authorList>
    </citation>
    <scope>NUCLEOTIDE SEQUENCE [LARGE SCALE GENOMIC DNA]</scope>
    <source>
        <strain>Alaska E43 / Type E3</strain>
    </source>
</reference>
<evidence type="ECO:0000255" key="1">
    <source>
        <dbReference type="HAMAP-Rule" id="MF_00367"/>
    </source>
</evidence>
<evidence type="ECO:0000255" key="2">
    <source>
        <dbReference type="PROSITE-ProRule" id="PRU01050"/>
    </source>
</evidence>
<organism>
    <name type="scientific">Clostridium botulinum (strain Alaska E43 / Type E3)</name>
    <dbReference type="NCBI Taxonomy" id="508767"/>
    <lineage>
        <taxon>Bacteria</taxon>
        <taxon>Bacillati</taxon>
        <taxon>Bacillota</taxon>
        <taxon>Clostridia</taxon>
        <taxon>Eubacteriales</taxon>
        <taxon>Clostridiaceae</taxon>
        <taxon>Clostridium</taxon>
    </lineage>
</organism>
<sequence length="295" mass="33750">MFKSGFVTIVGRPNVGKSTLLNYIMGEKLSIVSNKPQTTRNNIQTILTGDDYQIVFVDTPGIHKPKHKLGEYMVNSAKDSTNDVDLVLFLTNPDEEIGKGDKFILESLKDKKCPVYLVLNKIDESTPERVAKSLEMYSSEFNFKEIVPIAAIKGKNVDTLVDLMKTELPEGPKYYPEDMITDVPERFVVSEIVREKALRCLRDEVPHGIAVDIIQMKQSDNGTYHIEVDLICEKDSHKGIIIGKNGQMLKKIGETSRYELERFLRTKVNVKIWVKVRKEWRDNQNLLKELGYKKK</sequence>
<name>ERA_CLOBA</name>
<gene>
    <name evidence="1" type="primary">era</name>
    <name type="ordered locus">CLH_0873</name>
</gene>
<keyword id="KW-1003">Cell membrane</keyword>
<keyword id="KW-0963">Cytoplasm</keyword>
<keyword id="KW-0342">GTP-binding</keyword>
<keyword id="KW-0472">Membrane</keyword>
<keyword id="KW-0547">Nucleotide-binding</keyword>
<keyword id="KW-0690">Ribosome biogenesis</keyword>
<keyword id="KW-0694">RNA-binding</keyword>
<keyword id="KW-0699">rRNA-binding</keyword>
<protein>
    <recommendedName>
        <fullName evidence="1">GTPase Era</fullName>
    </recommendedName>
</protein>